<feature type="chain" id="PRO_0000450473" description="Thioesterase pytI">
    <location>
        <begin position="1"/>
        <end position="310"/>
    </location>
</feature>
<feature type="transmembrane region" description="Helical" evidence="1">
    <location>
        <begin position="14"/>
        <end position="34"/>
    </location>
</feature>
<feature type="transmembrane region" description="Helical" evidence="1">
    <location>
        <begin position="95"/>
        <end position="115"/>
    </location>
</feature>
<feature type="region of interest" description="Disordered" evidence="2">
    <location>
        <begin position="168"/>
        <end position="195"/>
    </location>
</feature>
<feature type="compositionally biased region" description="Low complexity" evidence="2">
    <location>
        <begin position="170"/>
        <end position="184"/>
    </location>
</feature>
<gene>
    <name evidence="4" type="primary">pytI</name>
    <name type="ORF">ATETN484_0003083900</name>
    <name type="ORF">g7163</name>
</gene>
<protein>
    <recommendedName>
        <fullName evidence="4">Thioesterase pytI</fullName>
        <ecNumber evidence="6">3.1.-.-</ecNumber>
    </recommendedName>
    <alternativeName>
        <fullName evidence="4">Pyranterreones biosynthesis cluster protein I</fullName>
    </alternativeName>
</protein>
<comment type="function">
    <text evidence="3 6">Thioesterase; part of the gene cluster that mediates the biosynthesis of pyranterreones, a family of antioxidative compounds (PubMed:32077283). The first step of pyranonigrins biosynthesis is performed by the hybrid PKS-NRPS synthetase pytA that condenses 4 malonyl-CoA units ato the acetyl starter unit by the modular PKS of pytA (PubMed:32077283). The acyl chain is then connected to an L-serine through the amide bond by the modular NRPS of pytA (PubMed:32077283). A tetramic acid is formed and released from the PKS-NRPS pytA to give pyranterreone 5 with the help of the thioesterase pytI (PubMed:32077283). Pyranterreone 5 could be methylated by pytC to afford pyranterreone 6 (Probable). Both pyranterreones 5 and 6 are subsequently oxidized by the FAD-linked oxidoreductase pytB and the cytochrome P450 monooxygenase pytD to form the fused gamma-pyrone core, resulting in pyranterreones 7 and 11, respectively (PubMed:32077283). The hydroxy group at C-8 of pyranterreones 7 and 11 are dehydrated by the aspartyl protease pytH to form a delta-7 double bond to give pyranterreones 3 and 1, 2 accordingly (PubMed:32077283). The exo-methylene of pyranterreone 3 could be reduced into a pendant methyl by reductase pytE to provide pyranterreone 4, also known as cordylactam (Probable). Pyranterreone 4 can be reconverted to pyranterreone 3 through pytB-catalyzed dehydrogenation or further oxidized to pyranterreones 9 and 10 (Probable).</text>
</comment>
<comment type="pathway">
    <text evidence="3">Secondary metabolite biosynthesis.</text>
</comment>
<comment type="subcellular location">
    <subcellularLocation>
        <location evidence="1">Membrane</location>
        <topology evidence="1">Multi-pass membrane protein</topology>
    </subcellularLocation>
</comment>
<comment type="induction">
    <text evidence="3">Expression is positively regulated by the cluster-specific transcription factor pytR.</text>
</comment>
<comment type="disruption phenotype">
    <text evidence="3">Impairs the production of pyranterreones.</text>
</comment>
<comment type="similarity">
    <text evidence="5">Belongs to the AMT4 thioesterase family.</text>
</comment>
<accession>P9WEZ1</accession>
<accession>A0A5M3YSX7</accession>
<keyword id="KW-0378">Hydrolase</keyword>
<keyword id="KW-0472">Membrane</keyword>
<keyword id="KW-0812">Transmembrane</keyword>
<keyword id="KW-1133">Transmembrane helix</keyword>
<organism>
    <name type="scientific">Aspergillus terreus</name>
    <dbReference type="NCBI Taxonomy" id="33178"/>
    <lineage>
        <taxon>Eukaryota</taxon>
        <taxon>Fungi</taxon>
        <taxon>Dikarya</taxon>
        <taxon>Ascomycota</taxon>
        <taxon>Pezizomycotina</taxon>
        <taxon>Eurotiomycetes</taxon>
        <taxon>Eurotiomycetidae</taxon>
        <taxon>Eurotiales</taxon>
        <taxon>Aspergillaceae</taxon>
        <taxon>Aspergillus</taxon>
        <taxon>Aspergillus subgen. Circumdati</taxon>
    </lineage>
</organism>
<sequence>MDIVAHIQGDPGSSLTPLILIHAISGLALPYFALRPLSTDSDDGDSDKSRPVYGLSSPIFESVSAFRRHGKSLPSLALEYVRIIRREIQPRGPYLLGGWSMGGMLAIEMAAIFVAQGETVKHVVMIDSLNPEVYPPFQDSQEHQVLSTIMYNAIAWRVEGLEEACMPTLSDDASTTTSSDNSRASTDHGADSEVESEADLDDFMQQLREHVHQGMRMLASYHTLHRHIYLPDTAVTLIKCTMLGNLSPLLRASRKVFAKKNLLDPHNGWRTEQFRSFRSVPFASTHDACFDAEASEELTTILRGVLKDID</sequence>
<proteinExistence type="evidence at transcript level"/>
<reference key="1">
    <citation type="submission" date="2019-10" db="EMBL/GenBank/DDBJ databases">
        <title>Aspergillus terreus TN-484 whole genome shotgun sequence.</title>
        <authorList>
            <person name="Kanamasa S."/>
            <person name="Takahashi H."/>
        </authorList>
    </citation>
    <scope>NUCLEOTIDE SEQUENCE [GENOMIC DNA]</scope>
    <source>
        <strain>TN-484</strain>
    </source>
</reference>
<reference key="2">
    <citation type="journal article" date="2020" name="J. Nat. Prod.">
        <title>Discovery and characterization of a PKS-NRPS hybrid in Aspergillus terreus by genome mining.</title>
        <authorList>
            <person name="Tang S."/>
            <person name="Zhang W."/>
            <person name="Li Z."/>
            <person name="Li H."/>
            <person name="Geng C."/>
            <person name="Huang X."/>
            <person name="Lu X."/>
        </authorList>
    </citation>
    <scope>NUCLEOTIDE SEQUENCE [GENOMIC DNA]</scope>
    <scope>INDUCTION</scope>
    <scope>FUNCTION</scope>
    <scope>DISRUPTION PHENOTYPE</scope>
    <scope>PATHWAY</scope>
    <source>
        <strain>MEFC01</strain>
    </source>
</reference>
<name>PYTI_ASPTE</name>
<dbReference type="EC" id="3.1.-.-" evidence="6"/>
<dbReference type="EMBL" id="BKZM02000003">
    <property type="protein sequence ID" value="GES59613.1"/>
    <property type="molecule type" value="Genomic_DNA"/>
</dbReference>
<dbReference type="EMBL" id="MN699960">
    <property type="protein sequence ID" value="QIH14018.1"/>
    <property type="molecule type" value="Genomic_DNA"/>
</dbReference>
<dbReference type="SMR" id="P9WEZ1"/>
<dbReference type="ESTHER" id="aspte-pyti">
    <property type="family name" value="Thioesterase"/>
</dbReference>
<dbReference type="OrthoDB" id="10253869at2759"/>
<dbReference type="GO" id="GO:0016020">
    <property type="term" value="C:membrane"/>
    <property type="evidence" value="ECO:0007669"/>
    <property type="project" value="UniProtKB-SubCell"/>
</dbReference>
<dbReference type="GO" id="GO:0016787">
    <property type="term" value="F:hydrolase activity"/>
    <property type="evidence" value="ECO:0007669"/>
    <property type="project" value="UniProtKB-KW"/>
</dbReference>
<dbReference type="GO" id="GO:0009058">
    <property type="term" value="P:biosynthetic process"/>
    <property type="evidence" value="ECO:0007669"/>
    <property type="project" value="InterPro"/>
</dbReference>
<dbReference type="Gene3D" id="3.40.50.1820">
    <property type="entry name" value="alpha/beta hydrolase"/>
    <property type="match status" value="1"/>
</dbReference>
<dbReference type="InterPro" id="IPR029058">
    <property type="entry name" value="AB_hydrolase_fold"/>
</dbReference>
<dbReference type="InterPro" id="IPR001031">
    <property type="entry name" value="Thioesterase"/>
</dbReference>
<dbReference type="Pfam" id="PF00975">
    <property type="entry name" value="Thioesterase"/>
    <property type="match status" value="1"/>
</dbReference>
<dbReference type="SUPFAM" id="SSF53474">
    <property type="entry name" value="alpha/beta-Hydrolases"/>
    <property type="match status" value="1"/>
</dbReference>
<evidence type="ECO:0000255" key="1"/>
<evidence type="ECO:0000256" key="2">
    <source>
        <dbReference type="SAM" id="MobiDB-lite"/>
    </source>
</evidence>
<evidence type="ECO:0000269" key="3">
    <source>
    </source>
</evidence>
<evidence type="ECO:0000303" key="4">
    <source>
    </source>
</evidence>
<evidence type="ECO:0000305" key="5"/>
<evidence type="ECO:0000305" key="6">
    <source>
    </source>
</evidence>